<gene>
    <name type="primary">p29</name>
    <name type="synonym">ORF2</name>
</gene>
<name>P29_CILVC</name>
<sequence length="263" mass="29129">MSIVTFTLTDPSSALIAEIMQAIERHNVSVPEGLRDISKPTKKKQQSQPQQLSRASARPQQLQPGPSGYQAKKPAKQKAEVVKPKQKQLAPPINKKAAKAKLYGLEQHCPKYAEAKGLQKQIGMTYYKISEPYALPDFKVMEASEDLVAVSEKDPMGSFEKRLYSMGFPKRPIKNVVPVFEFSDHYIVVFFPGSNAEIVKNVPKDSVSDYAEAQLAALLAARQQINQIHELGDILPTNYLNVLDSGTQDVVVSDEEDDSDSAQ</sequence>
<protein>
    <recommendedName>
        <fullName>P29</fullName>
    </recommendedName>
    <alternativeName>
        <fullName>Uncharacterized protein p29</fullName>
    </alternativeName>
</protein>
<feature type="chain" id="PRO_0000404539" description="P29">
    <location>
        <begin position="1"/>
        <end position="263"/>
    </location>
</feature>
<feature type="region of interest" description="Disordered" evidence="1">
    <location>
        <begin position="30"/>
        <end position="93"/>
    </location>
</feature>
<feature type="compositionally biased region" description="Basic and acidic residues" evidence="1">
    <location>
        <begin position="30"/>
        <end position="39"/>
    </location>
</feature>
<feature type="compositionally biased region" description="Polar residues" evidence="1">
    <location>
        <begin position="52"/>
        <end position="64"/>
    </location>
</feature>
<proteinExistence type="predicted"/>
<accession>Q1KZ58</accession>
<reference key="1">
    <citation type="journal article" date="2006" name="J. Gen. Virol.">
        <title>Complete nucleotide sequence, genomic organization and phylogenetic analysis of Citrus leprosis virus cytoplasmic type.</title>
        <authorList>
            <person name="Locali-Fabris E.C."/>
            <person name="Freitas-Astua J."/>
            <person name="Souza A.A."/>
            <person name="Takita M.A."/>
            <person name="Astua-Monge G."/>
            <person name="Antonioli-Luizon R."/>
            <person name="Rodrigues V."/>
            <person name="Targon M.L."/>
            <person name="Machado M.A."/>
        </authorList>
    </citation>
    <scope>NUCLEOTIDE SEQUENCE [GENOMIC RNA]</scope>
</reference>
<reference key="2">
    <citation type="submission" date="2006-01" db="EMBL/GenBank/DDBJ databases">
        <authorList>
            <person name="Locali E.C."/>
            <person name="Freitas-Astua J."/>
            <person name="Souza A.A."/>
            <person name="Takita M.A."/>
            <person name="Astua-Monge G."/>
            <person name="Antonioli-Luizon R."/>
            <person name="Rodrigues V."/>
            <person name="Targon M.L.P.N."/>
            <person name="Machado M.A."/>
        </authorList>
    </citation>
    <scope>NUCLEOTIDE SEQUENCE [GENOMIC RNA]</scope>
</reference>
<reference key="3">
    <citation type="submission" date="2006-02" db="EMBL/GenBank/DDBJ databases">
        <title>Citrus leprosis symptoms can be associated with the presence of two different viruses, cytoplasmic and nuclear, the former having a multipartite RNA genome.</title>
        <authorList>
            <person name="Guerra A.S."/>
            <person name="Manjunath K.L."/>
            <person name="Rangel E."/>
            <person name="Brlansky R.H."/>
            <person name="Lee R.F."/>
        </authorList>
    </citation>
    <scope>NUCLEOTIDE SEQUENCE [GENOMIC RNA]</scope>
</reference>
<reference key="4">
    <citation type="journal article" date="2006" name="Virus Genes">
        <title>The complete nucleotide sequence and genomic organization of Citrus Leprosis associated Virus, Cytoplasmatic type (CiLV-C).</title>
        <authorList>
            <person name="Pascon R.C."/>
            <person name="Kitajima J.P."/>
            <person name="Breton M.C."/>
            <person name="Assumpcao L."/>
            <person name="Greggio C."/>
            <person name="Zanca A.S."/>
            <person name="Okura V.K."/>
            <person name="Alegria M.C."/>
            <person name="Camargo M.E."/>
            <person name="Silva G.G."/>
            <person name="Cardozo J.C."/>
            <person name="Vallim M.A."/>
            <person name="Franco S.F."/>
            <person name="Silva V.H."/>
            <person name="Jordao H. Jr."/>
            <person name="Oliveira F."/>
            <person name="Giachetto P.F."/>
            <person name="Ferrari F."/>
            <person name="Aguilar-Vildoso C.I."/>
            <person name="Franchiscini F.J."/>
            <person name="Silva J.M."/>
            <person name="Arruda P."/>
            <person name="Ferro J.A."/>
            <person name="Reinach F."/>
            <person name="da Silva A.C."/>
        </authorList>
    </citation>
    <scope>NUCLEOTIDE SEQUENCE [GENOMIC RNA]</scope>
</reference>
<reference key="5">
    <citation type="submission" date="2006-06" db="EMBL/GenBank/DDBJ databases">
        <title>Isolated nucleic acids molecules from the genome of citrus leprosis virus and uses thereof.</title>
        <authorList>
            <person name="Pascon R.C."/>
            <person name="Silva A.C.R."/>
        </authorList>
    </citation>
    <scope>NUCLEOTIDE SEQUENCE [GENOMIC RNA]</scope>
</reference>
<reference key="6">
    <citation type="submission" date="2005-08" db="EMBL/GenBank/DDBJ databases">
        <authorList>
            <person name="Kitajima J.F.W."/>
            <person name="Martins A.R."/>
        </authorList>
    </citation>
    <scope>NUCLEOTIDE SEQUENCE [GENOMIC RNA]</scope>
</reference>
<dbReference type="EMBL" id="DQ157466">
    <property type="protein sequence ID" value="ABA42876.1"/>
    <property type="molecule type" value="Genomic_RNA"/>
</dbReference>
<dbReference type="EMBL" id="DQ352194">
    <property type="protein sequence ID" value="ABC75822.1"/>
    <property type="molecule type" value="Genomic_RNA"/>
</dbReference>
<dbReference type="EMBL" id="DQ388512">
    <property type="protein sequence ID" value="ABD59464.1"/>
    <property type="molecule type" value="Genomic_RNA"/>
</dbReference>
<dbReference type="RefSeq" id="YP_654539.1">
    <property type="nucleotide sequence ID" value="NC_008169.1"/>
</dbReference>
<dbReference type="GeneID" id="4155847"/>
<dbReference type="KEGG" id="vg:4155847"/>
<dbReference type="Proteomes" id="UP000001101">
    <property type="component" value="Genome"/>
</dbReference>
<organismHost>
    <name type="scientific">Citrus sinensis</name>
    <name type="common">Sweet orange</name>
    <name type="synonym">Citrus aurantium var. sinensis</name>
    <dbReference type="NCBI Taxonomy" id="2711"/>
</organismHost>
<keyword id="KW-1185">Reference proteome</keyword>
<organism>
    <name type="scientific">Citrus leprosis virus C (isolate Citrus sinesis/Brazil/Cordeiropolis/2003)</name>
    <name type="common">CiLV-C</name>
    <dbReference type="NCBI Taxonomy" id="686950"/>
    <lineage>
        <taxon>Viruses</taxon>
        <taxon>Riboviria</taxon>
        <taxon>Orthornavirae</taxon>
        <taxon>Kitrinoviricota</taxon>
        <taxon>Alsuviricetes</taxon>
        <taxon>Martellivirales</taxon>
        <taxon>Kitaviridae</taxon>
        <taxon>Cilevirus</taxon>
        <taxon>Cilevirus leprosis</taxon>
    </lineage>
</organism>
<evidence type="ECO:0000256" key="1">
    <source>
        <dbReference type="SAM" id="MobiDB-lite"/>
    </source>
</evidence>